<reference key="1">
    <citation type="journal article" date="2006" name="J. Bacteriol.">
        <title>Whole-genome sequence of Listeria welshimeri reveals common steps in genome reduction with Listeria innocua as compared to Listeria monocytogenes.</title>
        <authorList>
            <person name="Hain T."/>
            <person name="Steinweg C."/>
            <person name="Kuenne C.T."/>
            <person name="Billion A."/>
            <person name="Ghai R."/>
            <person name="Chatterjee S.S."/>
            <person name="Domann E."/>
            <person name="Kaerst U."/>
            <person name="Goesmann A."/>
            <person name="Bekel T."/>
            <person name="Bartels D."/>
            <person name="Kaiser O."/>
            <person name="Meyer F."/>
            <person name="Puehler A."/>
            <person name="Weisshaar B."/>
            <person name="Wehland J."/>
            <person name="Liang C."/>
            <person name="Dandekar T."/>
            <person name="Lampidis R."/>
            <person name="Kreft J."/>
            <person name="Goebel W."/>
            <person name="Chakraborty T."/>
        </authorList>
    </citation>
    <scope>NUCLEOTIDE SEQUENCE [LARGE SCALE GENOMIC DNA]</scope>
    <source>
        <strain>ATCC 35897 / DSM 20650 / CCUG 15529 / CIP 8149 / NCTC 11857 / SLCC 5334 / V8</strain>
    </source>
</reference>
<evidence type="ECO:0000255" key="1">
    <source>
        <dbReference type="HAMAP-Rule" id="MF_00211"/>
    </source>
</evidence>
<organism>
    <name type="scientific">Listeria welshimeri serovar 6b (strain ATCC 35897 / DSM 20650 / CCUG 15529 / CIP 8149 / NCTC 11857 / SLCC 5334 / V8)</name>
    <dbReference type="NCBI Taxonomy" id="386043"/>
    <lineage>
        <taxon>Bacteria</taxon>
        <taxon>Bacillati</taxon>
        <taxon>Bacillota</taxon>
        <taxon>Bacilli</taxon>
        <taxon>Bacillales</taxon>
        <taxon>Listeriaceae</taxon>
        <taxon>Listeria</taxon>
    </lineage>
</organism>
<proteinExistence type="inferred from homology"/>
<dbReference type="EC" id="2.4.2.18" evidence="1"/>
<dbReference type="EMBL" id="AM263198">
    <property type="protein sequence ID" value="CAK21065.1"/>
    <property type="molecule type" value="Genomic_DNA"/>
</dbReference>
<dbReference type="RefSeq" id="WP_011702431.1">
    <property type="nucleotide sequence ID" value="NC_008555.1"/>
</dbReference>
<dbReference type="SMR" id="A0AJ83"/>
<dbReference type="STRING" id="386043.lwe1647"/>
<dbReference type="GeneID" id="61189523"/>
<dbReference type="KEGG" id="lwe:lwe1647"/>
<dbReference type="eggNOG" id="COG0547">
    <property type="taxonomic scope" value="Bacteria"/>
</dbReference>
<dbReference type="HOGENOM" id="CLU_034315_2_1_9"/>
<dbReference type="OrthoDB" id="9806430at2"/>
<dbReference type="UniPathway" id="UPA00035">
    <property type="reaction ID" value="UER00041"/>
</dbReference>
<dbReference type="Proteomes" id="UP000000779">
    <property type="component" value="Chromosome"/>
</dbReference>
<dbReference type="GO" id="GO:0005829">
    <property type="term" value="C:cytosol"/>
    <property type="evidence" value="ECO:0007669"/>
    <property type="project" value="TreeGrafter"/>
</dbReference>
<dbReference type="GO" id="GO:0004048">
    <property type="term" value="F:anthranilate phosphoribosyltransferase activity"/>
    <property type="evidence" value="ECO:0007669"/>
    <property type="project" value="UniProtKB-UniRule"/>
</dbReference>
<dbReference type="GO" id="GO:0000287">
    <property type="term" value="F:magnesium ion binding"/>
    <property type="evidence" value="ECO:0007669"/>
    <property type="project" value="UniProtKB-UniRule"/>
</dbReference>
<dbReference type="GO" id="GO:0000162">
    <property type="term" value="P:L-tryptophan biosynthetic process"/>
    <property type="evidence" value="ECO:0007669"/>
    <property type="project" value="UniProtKB-UniRule"/>
</dbReference>
<dbReference type="FunFam" id="1.20.970.10:FF:000014">
    <property type="entry name" value="Anthranilate phosphoribosyltransferase"/>
    <property type="match status" value="1"/>
</dbReference>
<dbReference type="FunFam" id="3.40.1030.10:FF:000002">
    <property type="entry name" value="Anthranilate phosphoribosyltransferase"/>
    <property type="match status" value="1"/>
</dbReference>
<dbReference type="Gene3D" id="3.40.1030.10">
    <property type="entry name" value="Nucleoside phosphorylase/phosphoribosyltransferase catalytic domain"/>
    <property type="match status" value="1"/>
</dbReference>
<dbReference type="Gene3D" id="1.20.970.10">
    <property type="entry name" value="Transferase, Pyrimidine Nucleoside Phosphorylase, Chain C"/>
    <property type="match status" value="1"/>
</dbReference>
<dbReference type="HAMAP" id="MF_00211">
    <property type="entry name" value="TrpD"/>
    <property type="match status" value="1"/>
</dbReference>
<dbReference type="InterPro" id="IPR005940">
    <property type="entry name" value="Anthranilate_Pribosyl_Tfrase"/>
</dbReference>
<dbReference type="InterPro" id="IPR000312">
    <property type="entry name" value="Glycosyl_Trfase_fam3"/>
</dbReference>
<dbReference type="InterPro" id="IPR017459">
    <property type="entry name" value="Glycosyl_Trfase_fam3_N_dom"/>
</dbReference>
<dbReference type="InterPro" id="IPR036320">
    <property type="entry name" value="Glycosyl_Trfase_fam3_N_dom_sf"/>
</dbReference>
<dbReference type="InterPro" id="IPR035902">
    <property type="entry name" value="Nuc_phospho_transferase"/>
</dbReference>
<dbReference type="NCBIfam" id="TIGR01245">
    <property type="entry name" value="trpD"/>
    <property type="match status" value="1"/>
</dbReference>
<dbReference type="PANTHER" id="PTHR43285">
    <property type="entry name" value="ANTHRANILATE PHOSPHORIBOSYLTRANSFERASE"/>
    <property type="match status" value="1"/>
</dbReference>
<dbReference type="PANTHER" id="PTHR43285:SF2">
    <property type="entry name" value="ANTHRANILATE PHOSPHORIBOSYLTRANSFERASE"/>
    <property type="match status" value="1"/>
</dbReference>
<dbReference type="Pfam" id="PF02885">
    <property type="entry name" value="Glycos_trans_3N"/>
    <property type="match status" value="1"/>
</dbReference>
<dbReference type="Pfam" id="PF00591">
    <property type="entry name" value="Glycos_transf_3"/>
    <property type="match status" value="1"/>
</dbReference>
<dbReference type="SUPFAM" id="SSF52418">
    <property type="entry name" value="Nucleoside phosphorylase/phosphoribosyltransferase catalytic domain"/>
    <property type="match status" value="1"/>
</dbReference>
<dbReference type="SUPFAM" id="SSF47648">
    <property type="entry name" value="Nucleoside phosphorylase/phosphoribosyltransferase N-terminal domain"/>
    <property type="match status" value="1"/>
</dbReference>
<accession>A0AJ83</accession>
<feature type="chain" id="PRO_1000043025" description="Anthranilate phosphoribosyltransferase">
    <location>
        <begin position="1"/>
        <end position="339"/>
    </location>
</feature>
<feature type="binding site" evidence="1">
    <location>
        <position position="79"/>
    </location>
    <ligand>
        <name>5-phospho-alpha-D-ribose 1-diphosphate</name>
        <dbReference type="ChEBI" id="CHEBI:58017"/>
    </ligand>
</feature>
<feature type="binding site" evidence="1">
    <location>
        <position position="79"/>
    </location>
    <ligand>
        <name>anthranilate</name>
        <dbReference type="ChEBI" id="CHEBI:16567"/>
        <label>1</label>
    </ligand>
</feature>
<feature type="binding site" evidence="1">
    <location>
        <begin position="82"/>
        <end position="83"/>
    </location>
    <ligand>
        <name>5-phospho-alpha-D-ribose 1-diphosphate</name>
        <dbReference type="ChEBI" id="CHEBI:58017"/>
    </ligand>
</feature>
<feature type="binding site" evidence="1">
    <location>
        <position position="87"/>
    </location>
    <ligand>
        <name>5-phospho-alpha-D-ribose 1-diphosphate</name>
        <dbReference type="ChEBI" id="CHEBI:58017"/>
    </ligand>
</feature>
<feature type="binding site" evidence="1">
    <location>
        <begin position="89"/>
        <end position="92"/>
    </location>
    <ligand>
        <name>5-phospho-alpha-D-ribose 1-diphosphate</name>
        <dbReference type="ChEBI" id="CHEBI:58017"/>
    </ligand>
</feature>
<feature type="binding site" evidence="1">
    <location>
        <position position="91"/>
    </location>
    <ligand>
        <name>Mg(2+)</name>
        <dbReference type="ChEBI" id="CHEBI:18420"/>
        <label>1</label>
    </ligand>
</feature>
<feature type="binding site" evidence="1">
    <location>
        <begin position="107"/>
        <end position="115"/>
    </location>
    <ligand>
        <name>5-phospho-alpha-D-ribose 1-diphosphate</name>
        <dbReference type="ChEBI" id="CHEBI:58017"/>
    </ligand>
</feature>
<feature type="binding site" evidence="1">
    <location>
        <position position="110"/>
    </location>
    <ligand>
        <name>anthranilate</name>
        <dbReference type="ChEBI" id="CHEBI:16567"/>
        <label>1</label>
    </ligand>
</feature>
<feature type="binding site" evidence="1">
    <location>
        <position position="119"/>
    </location>
    <ligand>
        <name>5-phospho-alpha-D-ribose 1-diphosphate</name>
        <dbReference type="ChEBI" id="CHEBI:58017"/>
    </ligand>
</feature>
<feature type="binding site" evidence="1">
    <location>
        <position position="165"/>
    </location>
    <ligand>
        <name>anthranilate</name>
        <dbReference type="ChEBI" id="CHEBI:16567"/>
        <label>2</label>
    </ligand>
</feature>
<feature type="binding site" evidence="1">
    <location>
        <position position="224"/>
    </location>
    <ligand>
        <name>Mg(2+)</name>
        <dbReference type="ChEBI" id="CHEBI:18420"/>
        <label>2</label>
    </ligand>
</feature>
<feature type="binding site" evidence="1">
    <location>
        <position position="225"/>
    </location>
    <ligand>
        <name>Mg(2+)</name>
        <dbReference type="ChEBI" id="CHEBI:18420"/>
        <label>1</label>
    </ligand>
</feature>
<feature type="binding site" evidence="1">
    <location>
        <position position="225"/>
    </location>
    <ligand>
        <name>Mg(2+)</name>
        <dbReference type="ChEBI" id="CHEBI:18420"/>
        <label>2</label>
    </ligand>
</feature>
<name>TRPD_LISW6</name>
<comment type="function">
    <text evidence="1">Catalyzes the transfer of the phosphoribosyl group of 5-phosphorylribose-1-pyrophosphate (PRPP) to anthranilate to yield N-(5'-phosphoribosyl)-anthranilate (PRA).</text>
</comment>
<comment type="catalytic activity">
    <reaction evidence="1">
        <text>N-(5-phospho-beta-D-ribosyl)anthranilate + diphosphate = 5-phospho-alpha-D-ribose 1-diphosphate + anthranilate</text>
        <dbReference type="Rhea" id="RHEA:11768"/>
        <dbReference type="ChEBI" id="CHEBI:16567"/>
        <dbReference type="ChEBI" id="CHEBI:18277"/>
        <dbReference type="ChEBI" id="CHEBI:33019"/>
        <dbReference type="ChEBI" id="CHEBI:58017"/>
        <dbReference type="EC" id="2.4.2.18"/>
    </reaction>
</comment>
<comment type="cofactor">
    <cofactor evidence="1">
        <name>Mg(2+)</name>
        <dbReference type="ChEBI" id="CHEBI:18420"/>
    </cofactor>
    <text evidence="1">Binds 2 magnesium ions per monomer.</text>
</comment>
<comment type="pathway">
    <text evidence="1">Amino-acid biosynthesis; L-tryptophan biosynthesis; L-tryptophan from chorismate: step 2/5.</text>
</comment>
<comment type="subunit">
    <text evidence="1">Homodimer.</text>
</comment>
<comment type="similarity">
    <text evidence="1">Belongs to the anthranilate phosphoribosyltransferase family.</text>
</comment>
<sequence>MESLLQKVYDQENLTKAEMNILATEIFEGRLSKTKMAAFLMALKVKGETAEEMAGIAEAMQEVAIQVAFPAGTAMDNCGTGGDKSNSFNISTTSAFVLAAAGIPVAKHGNRSISSRSGSADVCQELGIDINMRPEDMTYLLEKVGIAFLFAPHVHPNMKYVMDVRKELGTPTIFNLIGPLTNPVHLETQLMGIYRRDLLKQTAEVLGQLGRKRAVVLNGAGFMDEASLAGENHYALYESGEVQLFTLSPEEVGLANYPLEAIRGGDAKENAAILRSVLEGEPGAHLDTVLLNAGFGLFASGKVATVKEGVNLARDLVRSGLAKQKLADLITYQKEVLTK</sequence>
<gene>
    <name evidence="1" type="primary">trpD</name>
    <name type="ordered locus">lwe1647</name>
</gene>
<keyword id="KW-0028">Amino-acid biosynthesis</keyword>
<keyword id="KW-0057">Aromatic amino acid biosynthesis</keyword>
<keyword id="KW-0328">Glycosyltransferase</keyword>
<keyword id="KW-0460">Magnesium</keyword>
<keyword id="KW-0479">Metal-binding</keyword>
<keyword id="KW-0808">Transferase</keyword>
<keyword id="KW-0822">Tryptophan biosynthesis</keyword>
<protein>
    <recommendedName>
        <fullName evidence="1">Anthranilate phosphoribosyltransferase</fullName>
        <ecNumber evidence="1">2.4.2.18</ecNumber>
    </recommendedName>
</protein>